<sequence length="159" mass="18821">MTRMIIQNSGSWTLCGAVLLFVLPLIPTPEALQHTEEGLEMLFRERSQSDWENVWHQETHSRCRDKLVRQLYWACEKDIYRLTRRNKKRTGNDEAWIKKTTTEPDGSTWLHVNYANMFLRSRRSDGNTPSISNECCTKAGCTWEEYAEYCPSNKRRNHY</sequence>
<organism evidence="8">
    <name type="scientific">Drosophila melanogaster</name>
    <name type="common">Fruit fly</name>
    <dbReference type="NCBI Taxonomy" id="7227"/>
    <lineage>
        <taxon>Eukaryota</taxon>
        <taxon>Metazoa</taxon>
        <taxon>Ecdysozoa</taxon>
        <taxon>Arthropoda</taxon>
        <taxon>Hexapoda</taxon>
        <taxon>Insecta</taxon>
        <taxon>Pterygota</taxon>
        <taxon>Neoptera</taxon>
        <taxon>Endopterygota</taxon>
        <taxon>Diptera</taxon>
        <taxon>Brachycera</taxon>
        <taxon>Muscomorpha</taxon>
        <taxon>Ephydroidea</taxon>
        <taxon>Drosophilidae</taxon>
        <taxon>Drosophila</taxon>
        <taxon>Sophophora</taxon>
    </lineage>
</organism>
<feature type="signal peptide" evidence="2">
    <location>
        <begin position="1"/>
        <end position="31"/>
    </location>
</feature>
<feature type="chain" id="PRO_0000016209" description="Insulin-like peptide 7" evidence="2">
    <location>
        <begin position="32"/>
        <end position="159"/>
    </location>
</feature>
<feature type="peptide" id="PRO_0000016210" description="Insulin-like peptide 7 B chain" evidence="2">
    <location>
        <begin position="32"/>
        <end position="83"/>
    </location>
</feature>
<feature type="propeptide" id="PRO_0000016211" description="Connecting peptide" evidence="2">
    <location>
        <begin position="90"/>
        <end position="121"/>
    </location>
</feature>
<feature type="peptide" id="PRO_0000016212" description="Insulin-like peptide 7 A chain" evidence="2">
    <location>
        <begin position="124"/>
        <end position="159"/>
    </location>
</feature>
<feature type="disulfide bond" description="Interchain (between B and A chains)" evidence="1">
    <location>
        <begin position="63"/>
        <end position="136"/>
    </location>
</feature>
<feature type="disulfide bond" description="Interchain (between B and A chains)" evidence="1">
    <location>
        <begin position="75"/>
        <end position="150"/>
    </location>
</feature>
<feature type="disulfide bond" evidence="1">
    <location>
        <begin position="135"/>
        <end position="141"/>
    </location>
</feature>
<gene>
    <name evidence="7" type="primary">Ilp7</name>
    <name evidence="7" type="ORF">CG13317</name>
</gene>
<dbReference type="EMBL" id="AE014298">
    <property type="protein sequence ID" value="AAF45885.2"/>
    <property type="molecule type" value="Genomic_DNA"/>
</dbReference>
<dbReference type="RefSeq" id="NP_570070.1">
    <property type="nucleotide sequence ID" value="NM_130714.2"/>
</dbReference>
<dbReference type="BioGRID" id="57850">
    <property type="interactions" value="4"/>
</dbReference>
<dbReference type="FunCoup" id="Q9W4Q9">
    <property type="interactions" value="30"/>
</dbReference>
<dbReference type="STRING" id="7227.FBpp0070552"/>
<dbReference type="PaxDb" id="7227-FBpp0070552"/>
<dbReference type="EnsemblMetazoa" id="FBtr0070577">
    <property type="protein sequence ID" value="FBpp0070552"/>
    <property type="gene ID" value="FBgn0044046"/>
</dbReference>
<dbReference type="GeneID" id="31328"/>
<dbReference type="KEGG" id="dme:Dmel_CG13317"/>
<dbReference type="AGR" id="FB:FBgn0044046"/>
<dbReference type="CTD" id="31328"/>
<dbReference type="FlyBase" id="FBgn0044046">
    <property type="gene designation" value="Ilp7"/>
</dbReference>
<dbReference type="VEuPathDB" id="VectorBase:FBgn0044046"/>
<dbReference type="eggNOG" id="ENOG502S96B">
    <property type="taxonomic scope" value="Eukaryota"/>
</dbReference>
<dbReference type="HOGENOM" id="CLU_138138_0_0_1"/>
<dbReference type="InParanoid" id="Q9W4Q9"/>
<dbReference type="OMA" id="KTGCTWE"/>
<dbReference type="OrthoDB" id="10044229at2759"/>
<dbReference type="PhylomeDB" id="Q9W4Q9"/>
<dbReference type="Reactome" id="R-DME-110478">
    <property type="pathway name" value="Insulin signaling pathway"/>
</dbReference>
<dbReference type="SignaLink" id="Q9W4Q9"/>
<dbReference type="BioGRID-ORCS" id="31328">
    <property type="hits" value="0 hits in 1 CRISPR screen"/>
</dbReference>
<dbReference type="GenomeRNAi" id="31328"/>
<dbReference type="PRO" id="PR:Q9W4Q9"/>
<dbReference type="Proteomes" id="UP000000803">
    <property type="component" value="Chromosome X"/>
</dbReference>
<dbReference type="Bgee" id="FBgn0044046">
    <property type="expression patterns" value="Expressed in neurosecretory neuron and 10 other cell types or tissues"/>
</dbReference>
<dbReference type="ExpressionAtlas" id="Q9W4Q9">
    <property type="expression patterns" value="baseline and differential"/>
</dbReference>
<dbReference type="GO" id="GO:0005576">
    <property type="term" value="C:extracellular region"/>
    <property type="evidence" value="ECO:0000304"/>
    <property type="project" value="Reactome"/>
</dbReference>
<dbReference type="GO" id="GO:0005615">
    <property type="term" value="C:extracellular space"/>
    <property type="evidence" value="ECO:0000250"/>
    <property type="project" value="FlyBase"/>
</dbReference>
<dbReference type="GO" id="GO:0005158">
    <property type="term" value="F:insulin receptor binding"/>
    <property type="evidence" value="ECO:0000250"/>
    <property type="project" value="UniProtKB"/>
</dbReference>
<dbReference type="GO" id="GO:0008286">
    <property type="term" value="P:insulin receptor signaling pathway"/>
    <property type="evidence" value="ECO:0000250"/>
    <property type="project" value="UniProtKB"/>
</dbReference>
<dbReference type="CDD" id="cd04365">
    <property type="entry name" value="IlGF_relaxin_like"/>
    <property type="match status" value="1"/>
</dbReference>
<dbReference type="Gene3D" id="1.10.100.10">
    <property type="entry name" value="Insulin-like"/>
    <property type="match status" value="1"/>
</dbReference>
<dbReference type="InterPro" id="IPR036438">
    <property type="entry name" value="Insulin-like_sf"/>
</dbReference>
<dbReference type="SUPFAM" id="SSF56994">
    <property type="entry name" value="Insulin-like"/>
    <property type="match status" value="1"/>
</dbReference>
<reference evidence="6" key="1">
    <citation type="journal article" date="2000" name="Science">
        <title>The genome sequence of Drosophila melanogaster.</title>
        <authorList>
            <person name="Adams M.D."/>
            <person name="Celniker S.E."/>
            <person name="Holt R.A."/>
            <person name="Evans C.A."/>
            <person name="Gocayne J.D."/>
            <person name="Amanatides P.G."/>
            <person name="Scherer S.E."/>
            <person name="Li P.W."/>
            <person name="Hoskins R.A."/>
            <person name="Galle R.F."/>
            <person name="George R.A."/>
            <person name="Lewis S.E."/>
            <person name="Richards S."/>
            <person name="Ashburner M."/>
            <person name="Henderson S.N."/>
            <person name="Sutton G.G."/>
            <person name="Wortman J.R."/>
            <person name="Yandell M.D."/>
            <person name="Zhang Q."/>
            <person name="Chen L.X."/>
            <person name="Brandon R.C."/>
            <person name="Rogers Y.-H.C."/>
            <person name="Blazej R.G."/>
            <person name="Champe M."/>
            <person name="Pfeiffer B.D."/>
            <person name="Wan K.H."/>
            <person name="Doyle C."/>
            <person name="Baxter E.G."/>
            <person name="Helt G."/>
            <person name="Nelson C.R."/>
            <person name="Miklos G.L.G."/>
            <person name="Abril J.F."/>
            <person name="Agbayani A."/>
            <person name="An H.-J."/>
            <person name="Andrews-Pfannkoch C."/>
            <person name="Baldwin D."/>
            <person name="Ballew R.M."/>
            <person name="Basu A."/>
            <person name="Baxendale J."/>
            <person name="Bayraktaroglu L."/>
            <person name="Beasley E.M."/>
            <person name="Beeson K.Y."/>
            <person name="Benos P.V."/>
            <person name="Berman B.P."/>
            <person name="Bhandari D."/>
            <person name="Bolshakov S."/>
            <person name="Borkova D."/>
            <person name="Botchan M.R."/>
            <person name="Bouck J."/>
            <person name="Brokstein P."/>
            <person name="Brottier P."/>
            <person name="Burtis K.C."/>
            <person name="Busam D.A."/>
            <person name="Butler H."/>
            <person name="Cadieu E."/>
            <person name="Center A."/>
            <person name="Chandra I."/>
            <person name="Cherry J.M."/>
            <person name="Cawley S."/>
            <person name="Dahlke C."/>
            <person name="Davenport L.B."/>
            <person name="Davies P."/>
            <person name="de Pablos B."/>
            <person name="Delcher A."/>
            <person name="Deng Z."/>
            <person name="Mays A.D."/>
            <person name="Dew I."/>
            <person name="Dietz S.M."/>
            <person name="Dodson K."/>
            <person name="Doup L.E."/>
            <person name="Downes M."/>
            <person name="Dugan-Rocha S."/>
            <person name="Dunkov B.C."/>
            <person name="Dunn P."/>
            <person name="Durbin K.J."/>
            <person name="Evangelista C.C."/>
            <person name="Ferraz C."/>
            <person name="Ferriera S."/>
            <person name="Fleischmann W."/>
            <person name="Fosler C."/>
            <person name="Gabrielian A.E."/>
            <person name="Garg N.S."/>
            <person name="Gelbart W.M."/>
            <person name="Glasser K."/>
            <person name="Glodek A."/>
            <person name="Gong F."/>
            <person name="Gorrell J.H."/>
            <person name="Gu Z."/>
            <person name="Guan P."/>
            <person name="Harris M."/>
            <person name="Harris N.L."/>
            <person name="Harvey D.A."/>
            <person name="Heiman T.J."/>
            <person name="Hernandez J.R."/>
            <person name="Houck J."/>
            <person name="Hostin D."/>
            <person name="Houston K.A."/>
            <person name="Howland T.J."/>
            <person name="Wei M.-H."/>
            <person name="Ibegwam C."/>
            <person name="Jalali M."/>
            <person name="Kalush F."/>
            <person name="Karpen G.H."/>
            <person name="Ke Z."/>
            <person name="Kennison J.A."/>
            <person name="Ketchum K.A."/>
            <person name="Kimmel B.E."/>
            <person name="Kodira C.D."/>
            <person name="Kraft C.L."/>
            <person name="Kravitz S."/>
            <person name="Kulp D."/>
            <person name="Lai Z."/>
            <person name="Lasko P."/>
            <person name="Lei Y."/>
            <person name="Levitsky A.A."/>
            <person name="Li J.H."/>
            <person name="Li Z."/>
            <person name="Liang Y."/>
            <person name="Lin X."/>
            <person name="Liu X."/>
            <person name="Mattei B."/>
            <person name="McIntosh T.C."/>
            <person name="McLeod M.P."/>
            <person name="McPherson D."/>
            <person name="Merkulov G."/>
            <person name="Milshina N.V."/>
            <person name="Mobarry C."/>
            <person name="Morris J."/>
            <person name="Moshrefi A."/>
            <person name="Mount S.M."/>
            <person name="Moy M."/>
            <person name="Murphy B."/>
            <person name="Murphy L."/>
            <person name="Muzny D.M."/>
            <person name="Nelson D.L."/>
            <person name="Nelson D.R."/>
            <person name="Nelson K.A."/>
            <person name="Nixon K."/>
            <person name="Nusskern D.R."/>
            <person name="Pacleb J.M."/>
            <person name="Palazzolo M."/>
            <person name="Pittman G.S."/>
            <person name="Pan S."/>
            <person name="Pollard J."/>
            <person name="Puri V."/>
            <person name="Reese M.G."/>
            <person name="Reinert K."/>
            <person name="Remington K."/>
            <person name="Saunders R.D.C."/>
            <person name="Scheeler F."/>
            <person name="Shen H."/>
            <person name="Shue B.C."/>
            <person name="Siden-Kiamos I."/>
            <person name="Simpson M."/>
            <person name="Skupski M.P."/>
            <person name="Smith T.J."/>
            <person name="Spier E."/>
            <person name="Spradling A.C."/>
            <person name="Stapleton M."/>
            <person name="Strong R."/>
            <person name="Sun E."/>
            <person name="Svirskas R."/>
            <person name="Tector C."/>
            <person name="Turner R."/>
            <person name="Venter E."/>
            <person name="Wang A.H."/>
            <person name="Wang X."/>
            <person name="Wang Z.-Y."/>
            <person name="Wassarman D.A."/>
            <person name="Weinstock G.M."/>
            <person name="Weissenbach J."/>
            <person name="Williams S.M."/>
            <person name="Woodage T."/>
            <person name="Worley K.C."/>
            <person name="Wu D."/>
            <person name="Yang S."/>
            <person name="Yao Q.A."/>
            <person name="Ye J."/>
            <person name="Yeh R.-F."/>
            <person name="Zaveri J.S."/>
            <person name="Zhan M."/>
            <person name="Zhang G."/>
            <person name="Zhao Q."/>
            <person name="Zheng L."/>
            <person name="Zheng X.H."/>
            <person name="Zhong F.N."/>
            <person name="Zhong W."/>
            <person name="Zhou X."/>
            <person name="Zhu S.C."/>
            <person name="Zhu X."/>
            <person name="Smith H.O."/>
            <person name="Gibbs R.A."/>
            <person name="Myers E.W."/>
            <person name="Rubin G.M."/>
            <person name="Venter J.C."/>
        </authorList>
    </citation>
    <scope>NUCLEOTIDE SEQUENCE [LARGE SCALE GENOMIC DNA]</scope>
    <source>
        <strain evidence="3">Berkeley</strain>
    </source>
</reference>
<reference evidence="5 6" key="2">
    <citation type="journal article" date="2002" name="Genome Biol.">
        <title>Annotation of the Drosophila melanogaster euchromatic genome: a systematic review.</title>
        <authorList>
            <person name="Misra S."/>
            <person name="Crosby M.A."/>
            <person name="Mungall C.J."/>
            <person name="Matthews B.B."/>
            <person name="Campbell K.S."/>
            <person name="Hradecky P."/>
            <person name="Huang Y."/>
            <person name="Kaminker J.S."/>
            <person name="Millburn G.H."/>
            <person name="Prochnik S.E."/>
            <person name="Smith C.D."/>
            <person name="Tupy J.L."/>
            <person name="Whitfield E.J."/>
            <person name="Bayraktaroglu L."/>
            <person name="Berman B.P."/>
            <person name="Bettencourt B.R."/>
            <person name="Celniker S.E."/>
            <person name="de Grey A.D.N.J."/>
            <person name="Drysdale R.A."/>
            <person name="Harris N.L."/>
            <person name="Richter J."/>
            <person name="Russo S."/>
            <person name="Schroeder A.J."/>
            <person name="Shu S.Q."/>
            <person name="Stapleton M."/>
            <person name="Yamada C."/>
            <person name="Ashburner M."/>
            <person name="Gelbart W.M."/>
            <person name="Rubin G.M."/>
            <person name="Lewis S.E."/>
        </authorList>
    </citation>
    <scope>GENOME REANNOTATION</scope>
    <source>
        <strain>Berkeley</strain>
    </source>
</reference>
<reference evidence="5" key="3">
    <citation type="journal article" date="2001" name="Curr. Biol.">
        <title>An evolutionarily conserved function of the Drosophila insulin receptor and insulin-like peptides in growth control.</title>
        <authorList>
            <person name="Brogiolo W."/>
            <person name="Stocker H."/>
            <person name="Ikeya T."/>
            <person name="Rintelen F."/>
            <person name="Fernandez R."/>
            <person name="Hafen E."/>
        </authorList>
    </citation>
    <scope>IDENTIFICATION</scope>
    <scope>TISSUE SPECIFICITY</scope>
    <scope>DEVELOPMENTAL STAGE</scope>
</reference>
<protein>
    <recommendedName>
        <fullName evidence="7">Insulin-like peptide 7</fullName>
        <shortName>dILP7</shortName>
    </recommendedName>
    <alternativeName>
        <fullName>Insulin-related peptide 7</fullName>
    </alternativeName>
    <component>
        <recommendedName>
            <fullName>Insulin-like peptide 7 A chain</fullName>
        </recommendedName>
    </component>
    <component>
        <recommendedName>
            <fullName>Insulin-like peptide 7 B chain</fullName>
        </recommendedName>
    </component>
</protein>
<name>INSL7_DROME</name>
<proteinExistence type="evidence at transcript level"/>
<comment type="function">
    <text evidence="5">Possible ligand of InR/insulin-like receptor.</text>
</comment>
<comment type="subunit">
    <text evidence="1">Heterodimer of a B chain and an A chain linked by two disulfide bonds.</text>
</comment>
<comment type="subcellular location">
    <subcellularLocation>
        <location evidence="5">Secreted</location>
    </subcellularLocation>
</comment>
<comment type="tissue specificity">
    <text evidence="4">Broadly expressed at a low level throughout the embryo, except the yolk. Expressed at a moderate level in the embryonic midgut. Larval expression is restricted to ten cells of the ventral nerve cord - in four pairs of centrally located cells in the most posterior abdominal segments and in one pair of dorsally located cells in the A1 or A2 segments.</text>
</comment>
<comment type="developmental stage">
    <text evidence="4">Expressed in the embryo and larva.</text>
</comment>
<comment type="similarity">
    <text evidence="2">Belongs to the insulin family.</text>
</comment>
<evidence type="ECO:0000250" key="1">
    <source>
        <dbReference type="UniProtKB" id="P01308"/>
    </source>
</evidence>
<evidence type="ECO:0000255" key="2"/>
<evidence type="ECO:0000269" key="3">
    <source>
    </source>
</evidence>
<evidence type="ECO:0000269" key="4">
    <source>
    </source>
</evidence>
<evidence type="ECO:0000305" key="5"/>
<evidence type="ECO:0000312" key="6">
    <source>
        <dbReference type="EMBL" id="AAF45885.2"/>
    </source>
</evidence>
<evidence type="ECO:0000312" key="7">
    <source>
        <dbReference type="FlyBase" id="FBgn0044046"/>
    </source>
</evidence>
<evidence type="ECO:0000312" key="8">
    <source>
        <dbReference type="Proteomes" id="UP000000803"/>
    </source>
</evidence>
<accession>Q9W4Q9</accession>
<keyword id="KW-0165">Cleavage on pair of basic residues</keyword>
<keyword id="KW-1015">Disulfide bond</keyword>
<keyword id="KW-1185">Reference proteome</keyword>
<keyword id="KW-0964">Secreted</keyword>
<keyword id="KW-0732">Signal</keyword>